<accession>A7HX17</accession>
<protein>
    <recommendedName>
        <fullName evidence="1">Glutamyl-tRNA(Gln) amidotransferase subunit A</fullName>
        <shortName evidence="1">Glu-ADT subunit A</shortName>
        <ecNumber evidence="1">6.3.5.7</ecNumber>
    </recommendedName>
</protein>
<keyword id="KW-0067">ATP-binding</keyword>
<keyword id="KW-0436">Ligase</keyword>
<keyword id="KW-0547">Nucleotide-binding</keyword>
<keyword id="KW-0648">Protein biosynthesis</keyword>
<keyword id="KW-1185">Reference proteome</keyword>
<reference key="1">
    <citation type="journal article" date="2011" name="Stand. Genomic Sci.">
        <title>Complete genome sequence of Parvibaculum lavamentivorans type strain (DS-1(T)).</title>
        <authorList>
            <person name="Schleheck D."/>
            <person name="Weiss M."/>
            <person name="Pitluck S."/>
            <person name="Bruce D."/>
            <person name="Land M.L."/>
            <person name="Han S."/>
            <person name="Saunders E."/>
            <person name="Tapia R."/>
            <person name="Detter C."/>
            <person name="Brettin T."/>
            <person name="Han J."/>
            <person name="Woyke T."/>
            <person name="Goodwin L."/>
            <person name="Pennacchio L."/>
            <person name="Nolan M."/>
            <person name="Cook A.M."/>
            <person name="Kjelleberg S."/>
            <person name="Thomas T."/>
        </authorList>
    </citation>
    <scope>NUCLEOTIDE SEQUENCE [LARGE SCALE GENOMIC DNA]</scope>
    <source>
        <strain>DS-1 / DSM 13023 / NCIMB 13966</strain>
    </source>
</reference>
<evidence type="ECO:0000255" key="1">
    <source>
        <dbReference type="HAMAP-Rule" id="MF_00120"/>
    </source>
</evidence>
<proteinExistence type="inferred from homology"/>
<organism>
    <name type="scientific">Parvibaculum lavamentivorans (strain DS-1 / DSM 13023 / NCIMB 13966)</name>
    <dbReference type="NCBI Taxonomy" id="402881"/>
    <lineage>
        <taxon>Bacteria</taxon>
        <taxon>Pseudomonadati</taxon>
        <taxon>Pseudomonadota</taxon>
        <taxon>Alphaproteobacteria</taxon>
        <taxon>Hyphomicrobiales</taxon>
        <taxon>Parvibaculaceae</taxon>
        <taxon>Parvibaculum</taxon>
    </lineage>
</organism>
<name>GATA_PARL1</name>
<dbReference type="EC" id="6.3.5.7" evidence="1"/>
<dbReference type="EMBL" id="CP000774">
    <property type="protein sequence ID" value="ABS64450.1"/>
    <property type="molecule type" value="Genomic_DNA"/>
</dbReference>
<dbReference type="RefSeq" id="WP_012111764.1">
    <property type="nucleotide sequence ID" value="NC_009719.1"/>
</dbReference>
<dbReference type="SMR" id="A7HX17"/>
<dbReference type="STRING" id="402881.Plav_2843"/>
<dbReference type="KEGG" id="pla:Plav_2843"/>
<dbReference type="eggNOG" id="COG0154">
    <property type="taxonomic scope" value="Bacteria"/>
</dbReference>
<dbReference type="HOGENOM" id="CLU_009600_0_3_5"/>
<dbReference type="OrthoDB" id="9811471at2"/>
<dbReference type="Proteomes" id="UP000006377">
    <property type="component" value="Chromosome"/>
</dbReference>
<dbReference type="GO" id="GO:0030956">
    <property type="term" value="C:glutamyl-tRNA(Gln) amidotransferase complex"/>
    <property type="evidence" value="ECO:0007669"/>
    <property type="project" value="InterPro"/>
</dbReference>
<dbReference type="GO" id="GO:0005524">
    <property type="term" value="F:ATP binding"/>
    <property type="evidence" value="ECO:0007669"/>
    <property type="project" value="UniProtKB-KW"/>
</dbReference>
<dbReference type="GO" id="GO:0050567">
    <property type="term" value="F:glutaminyl-tRNA synthase (glutamine-hydrolyzing) activity"/>
    <property type="evidence" value="ECO:0007669"/>
    <property type="project" value="UniProtKB-UniRule"/>
</dbReference>
<dbReference type="GO" id="GO:0006412">
    <property type="term" value="P:translation"/>
    <property type="evidence" value="ECO:0007669"/>
    <property type="project" value="UniProtKB-UniRule"/>
</dbReference>
<dbReference type="Gene3D" id="3.90.1300.10">
    <property type="entry name" value="Amidase signature (AS) domain"/>
    <property type="match status" value="1"/>
</dbReference>
<dbReference type="HAMAP" id="MF_00120">
    <property type="entry name" value="GatA"/>
    <property type="match status" value="1"/>
</dbReference>
<dbReference type="InterPro" id="IPR000120">
    <property type="entry name" value="Amidase"/>
</dbReference>
<dbReference type="InterPro" id="IPR020556">
    <property type="entry name" value="Amidase_CS"/>
</dbReference>
<dbReference type="InterPro" id="IPR023631">
    <property type="entry name" value="Amidase_dom"/>
</dbReference>
<dbReference type="InterPro" id="IPR036928">
    <property type="entry name" value="AS_sf"/>
</dbReference>
<dbReference type="InterPro" id="IPR004412">
    <property type="entry name" value="GatA"/>
</dbReference>
<dbReference type="NCBIfam" id="TIGR00132">
    <property type="entry name" value="gatA"/>
    <property type="match status" value="1"/>
</dbReference>
<dbReference type="PANTHER" id="PTHR11895:SF151">
    <property type="entry name" value="GLUTAMYL-TRNA(GLN) AMIDOTRANSFERASE SUBUNIT A"/>
    <property type="match status" value="1"/>
</dbReference>
<dbReference type="PANTHER" id="PTHR11895">
    <property type="entry name" value="TRANSAMIDASE"/>
    <property type="match status" value="1"/>
</dbReference>
<dbReference type="Pfam" id="PF01425">
    <property type="entry name" value="Amidase"/>
    <property type="match status" value="1"/>
</dbReference>
<dbReference type="SUPFAM" id="SSF75304">
    <property type="entry name" value="Amidase signature (AS) enzymes"/>
    <property type="match status" value="1"/>
</dbReference>
<dbReference type="PROSITE" id="PS00571">
    <property type="entry name" value="AMIDASES"/>
    <property type="match status" value="1"/>
</dbReference>
<feature type="chain" id="PRO_1000071369" description="Glutamyl-tRNA(Gln) amidotransferase subunit A">
    <location>
        <begin position="1"/>
        <end position="492"/>
    </location>
</feature>
<feature type="active site" description="Charge relay system" evidence="1">
    <location>
        <position position="78"/>
    </location>
</feature>
<feature type="active site" description="Charge relay system" evidence="1">
    <location>
        <position position="158"/>
    </location>
</feature>
<feature type="active site" description="Acyl-ester intermediate" evidence="1">
    <location>
        <position position="182"/>
    </location>
</feature>
<gene>
    <name evidence="1" type="primary">gatA</name>
    <name type="ordered locus">Plav_2843</name>
</gene>
<comment type="function">
    <text evidence="1">Allows the formation of correctly charged Gln-tRNA(Gln) through the transamidation of misacylated Glu-tRNA(Gln) in organisms which lack glutaminyl-tRNA synthetase. The reaction takes place in the presence of glutamine and ATP through an activated gamma-phospho-Glu-tRNA(Gln).</text>
</comment>
<comment type="catalytic activity">
    <reaction evidence="1">
        <text>L-glutamyl-tRNA(Gln) + L-glutamine + ATP + H2O = L-glutaminyl-tRNA(Gln) + L-glutamate + ADP + phosphate + H(+)</text>
        <dbReference type="Rhea" id="RHEA:17521"/>
        <dbReference type="Rhea" id="RHEA-COMP:9681"/>
        <dbReference type="Rhea" id="RHEA-COMP:9684"/>
        <dbReference type="ChEBI" id="CHEBI:15377"/>
        <dbReference type="ChEBI" id="CHEBI:15378"/>
        <dbReference type="ChEBI" id="CHEBI:29985"/>
        <dbReference type="ChEBI" id="CHEBI:30616"/>
        <dbReference type="ChEBI" id="CHEBI:43474"/>
        <dbReference type="ChEBI" id="CHEBI:58359"/>
        <dbReference type="ChEBI" id="CHEBI:78520"/>
        <dbReference type="ChEBI" id="CHEBI:78521"/>
        <dbReference type="ChEBI" id="CHEBI:456216"/>
        <dbReference type="EC" id="6.3.5.7"/>
    </reaction>
</comment>
<comment type="subunit">
    <text evidence="1">Heterotrimer of A, B and C subunits.</text>
</comment>
<comment type="similarity">
    <text evidence="1">Belongs to the amidase family. GatA subfamily.</text>
</comment>
<sequence length="492" mass="52146">MSDLTKLTLAGARDALKKKEITSTELTGAYLKEMEAAAALNAYVTVTADKAMEMAKASDAKLAKGEGGALEGLPLGIKDLYCTKDVLTTACSHILDGFKPAYESTVTSNLWRDGAVMLGKLNNDEFAMGSSNETSHYGSVVNPWRRKGSDAKLVPGGSSGGSSAAVAANLCLAATATDTGGSIRQPAAFTGTVGLKPTYGRCSRWGIVAFASSLDQAGPIGRDVRDTAIMLGSMAGHDEKDTTSVDRAVPDYEAVLGQSIKGLSVGIPKEYRVDGMPGEIDELWSRGIEWLKAAGATVKEVSLPHTKYALPTYYIVAPAECSSNLARYDGVRYGLRVDGRDITDMYEKTRAAGFGAEVRRRVLMGTYVLSAGYYDAYYLKAQKVRSLIAQDFASAFSEVDVLLTPTAPSAAFAIGEKSDDPLSMYLNDVFTVPVNLAGLPGISVPAGLSGEGLPLGLQLIGRTFDEETLLKAAYAIEQAADFKAAPEAWWKA</sequence>